<comment type="function">
    <text evidence="1">IGPS catalyzes the conversion of PRFAR and glutamine to IGP, AICAR and glutamate. The HisF subunit catalyzes the cyclization activity that produces IGP and AICAR from PRFAR using the ammonia provided by the HisH subunit.</text>
</comment>
<comment type="catalytic activity">
    <reaction evidence="1">
        <text>5-[(5-phospho-1-deoxy-D-ribulos-1-ylimino)methylamino]-1-(5-phospho-beta-D-ribosyl)imidazole-4-carboxamide + L-glutamine = D-erythro-1-(imidazol-4-yl)glycerol 3-phosphate + 5-amino-1-(5-phospho-beta-D-ribosyl)imidazole-4-carboxamide + L-glutamate + H(+)</text>
        <dbReference type="Rhea" id="RHEA:24793"/>
        <dbReference type="ChEBI" id="CHEBI:15378"/>
        <dbReference type="ChEBI" id="CHEBI:29985"/>
        <dbReference type="ChEBI" id="CHEBI:58278"/>
        <dbReference type="ChEBI" id="CHEBI:58359"/>
        <dbReference type="ChEBI" id="CHEBI:58475"/>
        <dbReference type="ChEBI" id="CHEBI:58525"/>
        <dbReference type="EC" id="4.3.2.10"/>
    </reaction>
</comment>
<comment type="pathway">
    <text evidence="1">Amino-acid biosynthesis; L-histidine biosynthesis; L-histidine from 5-phospho-alpha-D-ribose 1-diphosphate: step 5/9.</text>
</comment>
<comment type="subunit">
    <text evidence="1">Heterodimer of HisH and HisF.</text>
</comment>
<comment type="subcellular location">
    <subcellularLocation>
        <location evidence="1">Cytoplasm</location>
    </subcellularLocation>
</comment>
<comment type="similarity">
    <text evidence="1">Belongs to the HisA/HisF family.</text>
</comment>
<organism>
    <name type="scientific">Stutzerimonas stutzeri (strain A1501)</name>
    <name type="common">Pseudomonas stutzeri</name>
    <dbReference type="NCBI Taxonomy" id="379731"/>
    <lineage>
        <taxon>Bacteria</taxon>
        <taxon>Pseudomonadati</taxon>
        <taxon>Pseudomonadota</taxon>
        <taxon>Gammaproteobacteria</taxon>
        <taxon>Pseudomonadales</taxon>
        <taxon>Pseudomonadaceae</taxon>
        <taxon>Stutzerimonas</taxon>
    </lineage>
</organism>
<evidence type="ECO:0000255" key="1">
    <source>
        <dbReference type="HAMAP-Rule" id="MF_01013"/>
    </source>
</evidence>
<feature type="chain" id="PRO_1000063122" description="Imidazole glycerol phosphate synthase subunit HisF">
    <location>
        <begin position="1"/>
        <end position="256"/>
    </location>
</feature>
<feature type="active site" evidence="1">
    <location>
        <position position="12"/>
    </location>
</feature>
<feature type="active site" evidence="1">
    <location>
        <position position="131"/>
    </location>
</feature>
<gene>
    <name evidence="1" type="primary">hisF</name>
    <name type="ordered locus">PST_4087</name>
</gene>
<reference key="1">
    <citation type="journal article" date="2008" name="Proc. Natl. Acad. Sci. U.S.A.">
        <title>Nitrogen fixation island and rhizosphere competence traits in the genome of root-associated Pseudomonas stutzeri A1501.</title>
        <authorList>
            <person name="Yan Y."/>
            <person name="Yang J."/>
            <person name="Dou Y."/>
            <person name="Chen M."/>
            <person name="Ping S."/>
            <person name="Peng J."/>
            <person name="Lu W."/>
            <person name="Zhang W."/>
            <person name="Yao Z."/>
            <person name="Li H."/>
            <person name="Liu W."/>
            <person name="He S."/>
            <person name="Geng L."/>
            <person name="Zhang X."/>
            <person name="Yang F."/>
            <person name="Yu H."/>
            <person name="Zhan Y."/>
            <person name="Li D."/>
            <person name="Lin Z."/>
            <person name="Wang Y."/>
            <person name="Elmerich C."/>
            <person name="Lin M."/>
            <person name="Jin Q."/>
        </authorList>
    </citation>
    <scope>NUCLEOTIDE SEQUENCE [LARGE SCALE GENOMIC DNA]</scope>
    <source>
        <strain>A1501</strain>
    </source>
</reference>
<proteinExistence type="inferred from homology"/>
<dbReference type="EC" id="4.3.2.10" evidence="1"/>
<dbReference type="EMBL" id="CP000304">
    <property type="protein sequence ID" value="ABP81710.1"/>
    <property type="molecule type" value="Genomic_DNA"/>
</dbReference>
<dbReference type="RefSeq" id="WP_011915090.1">
    <property type="nucleotide sequence ID" value="NC_009434.1"/>
</dbReference>
<dbReference type="SMR" id="A4VRV9"/>
<dbReference type="GeneID" id="75212478"/>
<dbReference type="KEGG" id="psa:PST_4087"/>
<dbReference type="eggNOG" id="COG0107">
    <property type="taxonomic scope" value="Bacteria"/>
</dbReference>
<dbReference type="HOGENOM" id="CLU_048577_4_0_6"/>
<dbReference type="UniPathway" id="UPA00031">
    <property type="reaction ID" value="UER00010"/>
</dbReference>
<dbReference type="Proteomes" id="UP000000233">
    <property type="component" value="Chromosome"/>
</dbReference>
<dbReference type="GO" id="GO:0005737">
    <property type="term" value="C:cytoplasm"/>
    <property type="evidence" value="ECO:0007669"/>
    <property type="project" value="UniProtKB-SubCell"/>
</dbReference>
<dbReference type="GO" id="GO:0000107">
    <property type="term" value="F:imidazoleglycerol-phosphate synthase activity"/>
    <property type="evidence" value="ECO:0007669"/>
    <property type="project" value="UniProtKB-UniRule"/>
</dbReference>
<dbReference type="GO" id="GO:0016829">
    <property type="term" value="F:lyase activity"/>
    <property type="evidence" value="ECO:0007669"/>
    <property type="project" value="UniProtKB-KW"/>
</dbReference>
<dbReference type="GO" id="GO:0000105">
    <property type="term" value="P:L-histidine biosynthetic process"/>
    <property type="evidence" value="ECO:0007669"/>
    <property type="project" value="UniProtKB-UniRule"/>
</dbReference>
<dbReference type="CDD" id="cd04731">
    <property type="entry name" value="HisF"/>
    <property type="match status" value="1"/>
</dbReference>
<dbReference type="FunFam" id="3.20.20.70:FF:000006">
    <property type="entry name" value="Imidazole glycerol phosphate synthase subunit HisF"/>
    <property type="match status" value="1"/>
</dbReference>
<dbReference type="Gene3D" id="3.20.20.70">
    <property type="entry name" value="Aldolase class I"/>
    <property type="match status" value="1"/>
</dbReference>
<dbReference type="HAMAP" id="MF_01013">
    <property type="entry name" value="HisF"/>
    <property type="match status" value="1"/>
</dbReference>
<dbReference type="InterPro" id="IPR013785">
    <property type="entry name" value="Aldolase_TIM"/>
</dbReference>
<dbReference type="InterPro" id="IPR006062">
    <property type="entry name" value="His_biosynth"/>
</dbReference>
<dbReference type="InterPro" id="IPR004651">
    <property type="entry name" value="HisF"/>
</dbReference>
<dbReference type="InterPro" id="IPR050064">
    <property type="entry name" value="IGPS_HisA/HisF"/>
</dbReference>
<dbReference type="InterPro" id="IPR011060">
    <property type="entry name" value="RibuloseP-bd_barrel"/>
</dbReference>
<dbReference type="NCBIfam" id="TIGR00735">
    <property type="entry name" value="hisF"/>
    <property type="match status" value="1"/>
</dbReference>
<dbReference type="PANTHER" id="PTHR21235:SF2">
    <property type="entry name" value="IMIDAZOLE GLYCEROL PHOSPHATE SYNTHASE HISHF"/>
    <property type="match status" value="1"/>
</dbReference>
<dbReference type="PANTHER" id="PTHR21235">
    <property type="entry name" value="IMIDAZOLE GLYCEROL PHOSPHATE SYNTHASE SUBUNIT HISF/H IGP SYNTHASE SUBUNIT HISF/H"/>
    <property type="match status" value="1"/>
</dbReference>
<dbReference type="Pfam" id="PF00977">
    <property type="entry name" value="His_biosynth"/>
    <property type="match status" value="1"/>
</dbReference>
<dbReference type="SUPFAM" id="SSF51366">
    <property type="entry name" value="Ribulose-phoshate binding barrel"/>
    <property type="match status" value="1"/>
</dbReference>
<sequence length="256" mass="27222">MALAKRIIPCLDVDNGRVVKGVQFENIRDAGDPVEIARRYDEQGADEITFLDITASVDNRDTTLHTVERMASQVFIPLTVGGGVRTVQDIRNLLNAGADKVSINTAAVFNPDFVGEAADRFGSQCIVVAIDAKKVSAPGEPGRWEIFTHGGRKPTGLDAVEWAKKMEALGAGEILLTSMDQDGVKSGYDLGVTRAISEALCIPVIASGGVGNLQHLADGILEGKADAVLAASIFHFGEYTVPEAKAYLAARGIVMR</sequence>
<name>HIS6_STUS1</name>
<keyword id="KW-0028">Amino-acid biosynthesis</keyword>
<keyword id="KW-0963">Cytoplasm</keyword>
<keyword id="KW-0368">Histidine biosynthesis</keyword>
<keyword id="KW-0456">Lyase</keyword>
<keyword id="KW-1185">Reference proteome</keyword>
<protein>
    <recommendedName>
        <fullName evidence="1">Imidazole glycerol phosphate synthase subunit HisF</fullName>
        <ecNumber evidence="1">4.3.2.10</ecNumber>
    </recommendedName>
    <alternativeName>
        <fullName evidence="1">IGP synthase cyclase subunit</fullName>
    </alternativeName>
    <alternativeName>
        <fullName evidence="1">IGP synthase subunit HisF</fullName>
    </alternativeName>
    <alternativeName>
        <fullName evidence="1">ImGP synthase subunit HisF</fullName>
        <shortName evidence="1">IGPS subunit HisF</shortName>
    </alternativeName>
</protein>
<accession>A4VRV9</accession>